<sequence length="75" mass="8986">MARYFRRRKFCRFTAEGVQEIDYKDIATLKNYITESGKIVPSRITGTRAKYQRQLARAIKRARYLSLLPYTDRHQ</sequence>
<reference key="1">
    <citation type="journal article" date="2005" name="Nucleic Acids Res.">
        <title>The genome sequence of Salmonella enterica serovar Choleraesuis, a highly invasive and resistant zoonotic pathogen.</title>
        <authorList>
            <person name="Chiu C.-H."/>
            <person name="Tang P."/>
            <person name="Chu C."/>
            <person name="Hu S."/>
            <person name="Bao Q."/>
            <person name="Yu J."/>
            <person name="Chou Y.-Y."/>
            <person name="Wang H.-S."/>
            <person name="Lee Y.-S."/>
        </authorList>
    </citation>
    <scope>NUCLEOTIDE SEQUENCE [LARGE SCALE GENOMIC DNA]</scope>
    <source>
        <strain>SC-B67</strain>
    </source>
</reference>
<name>RS18_SALCH</name>
<comment type="function">
    <text evidence="1">Binds as a heterodimer with protein bS6 to the central domain of the 16S rRNA, where it helps stabilize the platform of the 30S subunit.</text>
</comment>
<comment type="subunit">
    <text evidence="1">Part of the 30S ribosomal subunit. Forms a tight heterodimer with protein bS6.</text>
</comment>
<comment type="similarity">
    <text evidence="1">Belongs to the bacterial ribosomal protein bS18 family.</text>
</comment>
<accession>Q57GI9</accession>
<dbReference type="EMBL" id="AE017220">
    <property type="protein sequence ID" value="AAX68173.1"/>
    <property type="molecule type" value="Genomic_DNA"/>
</dbReference>
<dbReference type="RefSeq" id="WP_000135199.1">
    <property type="nucleotide sequence ID" value="NC_006905.1"/>
</dbReference>
<dbReference type="SMR" id="Q57GI9"/>
<dbReference type="GeneID" id="98186237"/>
<dbReference type="KEGG" id="sec:SCH_4267"/>
<dbReference type="HOGENOM" id="CLU_148710_2_3_6"/>
<dbReference type="Proteomes" id="UP000000538">
    <property type="component" value="Chromosome"/>
</dbReference>
<dbReference type="GO" id="GO:0022627">
    <property type="term" value="C:cytosolic small ribosomal subunit"/>
    <property type="evidence" value="ECO:0007669"/>
    <property type="project" value="TreeGrafter"/>
</dbReference>
<dbReference type="GO" id="GO:0070181">
    <property type="term" value="F:small ribosomal subunit rRNA binding"/>
    <property type="evidence" value="ECO:0007669"/>
    <property type="project" value="TreeGrafter"/>
</dbReference>
<dbReference type="GO" id="GO:0003735">
    <property type="term" value="F:structural constituent of ribosome"/>
    <property type="evidence" value="ECO:0007669"/>
    <property type="project" value="InterPro"/>
</dbReference>
<dbReference type="GO" id="GO:0006412">
    <property type="term" value="P:translation"/>
    <property type="evidence" value="ECO:0007669"/>
    <property type="project" value="UniProtKB-UniRule"/>
</dbReference>
<dbReference type="FunFam" id="4.10.640.10:FF:000001">
    <property type="entry name" value="30S ribosomal protein S18"/>
    <property type="match status" value="1"/>
</dbReference>
<dbReference type="Gene3D" id="4.10.640.10">
    <property type="entry name" value="Ribosomal protein S18"/>
    <property type="match status" value="1"/>
</dbReference>
<dbReference type="HAMAP" id="MF_00270">
    <property type="entry name" value="Ribosomal_bS18"/>
    <property type="match status" value="1"/>
</dbReference>
<dbReference type="InterPro" id="IPR001648">
    <property type="entry name" value="Ribosomal_bS18"/>
</dbReference>
<dbReference type="InterPro" id="IPR018275">
    <property type="entry name" value="Ribosomal_bS18_CS"/>
</dbReference>
<dbReference type="InterPro" id="IPR036870">
    <property type="entry name" value="Ribosomal_bS18_sf"/>
</dbReference>
<dbReference type="NCBIfam" id="TIGR00165">
    <property type="entry name" value="S18"/>
    <property type="match status" value="1"/>
</dbReference>
<dbReference type="PANTHER" id="PTHR13479">
    <property type="entry name" value="30S RIBOSOMAL PROTEIN S18"/>
    <property type="match status" value="1"/>
</dbReference>
<dbReference type="PANTHER" id="PTHR13479:SF40">
    <property type="entry name" value="SMALL RIBOSOMAL SUBUNIT PROTEIN BS18M"/>
    <property type="match status" value="1"/>
</dbReference>
<dbReference type="Pfam" id="PF01084">
    <property type="entry name" value="Ribosomal_S18"/>
    <property type="match status" value="1"/>
</dbReference>
<dbReference type="PRINTS" id="PR00974">
    <property type="entry name" value="RIBOSOMALS18"/>
</dbReference>
<dbReference type="SUPFAM" id="SSF46911">
    <property type="entry name" value="Ribosomal protein S18"/>
    <property type="match status" value="1"/>
</dbReference>
<dbReference type="PROSITE" id="PS00057">
    <property type="entry name" value="RIBOSOMAL_S18"/>
    <property type="match status" value="1"/>
</dbReference>
<keyword id="KW-0687">Ribonucleoprotein</keyword>
<keyword id="KW-0689">Ribosomal protein</keyword>
<keyword id="KW-0694">RNA-binding</keyword>
<keyword id="KW-0699">rRNA-binding</keyword>
<organism>
    <name type="scientific">Salmonella choleraesuis (strain SC-B67)</name>
    <dbReference type="NCBI Taxonomy" id="321314"/>
    <lineage>
        <taxon>Bacteria</taxon>
        <taxon>Pseudomonadati</taxon>
        <taxon>Pseudomonadota</taxon>
        <taxon>Gammaproteobacteria</taxon>
        <taxon>Enterobacterales</taxon>
        <taxon>Enterobacteriaceae</taxon>
        <taxon>Salmonella</taxon>
    </lineage>
</organism>
<gene>
    <name evidence="1" type="primary">rpsR</name>
    <name type="ordered locus">SCH_4267</name>
</gene>
<feature type="chain" id="PRO_1000003597" description="Small ribosomal subunit protein bS18">
    <location>
        <begin position="1"/>
        <end position="75"/>
    </location>
</feature>
<proteinExistence type="inferred from homology"/>
<evidence type="ECO:0000255" key="1">
    <source>
        <dbReference type="HAMAP-Rule" id="MF_00270"/>
    </source>
</evidence>
<evidence type="ECO:0000305" key="2"/>
<protein>
    <recommendedName>
        <fullName evidence="1">Small ribosomal subunit protein bS18</fullName>
    </recommendedName>
    <alternativeName>
        <fullName evidence="2">30S ribosomal protein S18</fullName>
    </alternativeName>
</protein>